<proteinExistence type="inferred from homology"/>
<protein>
    <recommendedName>
        <fullName evidence="1">Probable transcriptional regulatory protein Bphyt_1301</fullName>
    </recommendedName>
</protein>
<comment type="subcellular location">
    <subcellularLocation>
        <location evidence="1">Cytoplasm</location>
    </subcellularLocation>
</comment>
<comment type="similarity">
    <text evidence="1">Belongs to the TACO1 family.</text>
</comment>
<sequence length="242" mass="26053">MAGHSKWANIKHKKAAADAKRGKVWTRLIKEIQVAARMGGGDIDSNPRLRLAVEKAYDANMPKDNVNRAIQRGVGGVDGASYEEIRYEGYGIGGAAVIVDTMTDNRTRTVAEVRHAFSKNGGNMGTDGSVSFMFDHVGQFLFAPGTAEDKLMEAALEAGADDVVTNDDGSIEVLCPPNDFPKVKSALEAAGFKAELAEVTMKPQTEVEFTGEDAVKMQKLLDALENLDDVQEVYTNAAIADE</sequence>
<name>Y1301_PARPJ</name>
<feature type="chain" id="PRO_1000132167" description="Probable transcriptional regulatory protein Bphyt_1301">
    <location>
        <begin position="1"/>
        <end position="242"/>
    </location>
</feature>
<reference key="1">
    <citation type="journal article" date="2011" name="J. Bacteriol.">
        <title>Complete genome sequence of the plant growth-promoting endophyte Burkholderia phytofirmans strain PsJN.</title>
        <authorList>
            <person name="Weilharter A."/>
            <person name="Mitter B."/>
            <person name="Shin M.V."/>
            <person name="Chain P.S."/>
            <person name="Nowak J."/>
            <person name="Sessitsch A."/>
        </authorList>
    </citation>
    <scope>NUCLEOTIDE SEQUENCE [LARGE SCALE GENOMIC DNA]</scope>
    <source>
        <strain>DSM 17436 / LMG 22146 / PsJN</strain>
    </source>
</reference>
<accession>B2T2A5</accession>
<organism>
    <name type="scientific">Paraburkholderia phytofirmans (strain DSM 17436 / LMG 22146 / PsJN)</name>
    <name type="common">Burkholderia phytofirmans</name>
    <dbReference type="NCBI Taxonomy" id="398527"/>
    <lineage>
        <taxon>Bacteria</taxon>
        <taxon>Pseudomonadati</taxon>
        <taxon>Pseudomonadota</taxon>
        <taxon>Betaproteobacteria</taxon>
        <taxon>Burkholderiales</taxon>
        <taxon>Burkholderiaceae</taxon>
        <taxon>Paraburkholderia</taxon>
    </lineage>
</organism>
<keyword id="KW-0963">Cytoplasm</keyword>
<keyword id="KW-0238">DNA-binding</keyword>
<keyword id="KW-0804">Transcription</keyword>
<keyword id="KW-0805">Transcription regulation</keyword>
<gene>
    <name type="ordered locus">Bphyt_1301</name>
</gene>
<evidence type="ECO:0000255" key="1">
    <source>
        <dbReference type="HAMAP-Rule" id="MF_00693"/>
    </source>
</evidence>
<dbReference type="EMBL" id="CP001052">
    <property type="protein sequence ID" value="ACD15716.1"/>
    <property type="molecule type" value="Genomic_DNA"/>
</dbReference>
<dbReference type="RefSeq" id="WP_012432336.1">
    <property type="nucleotide sequence ID" value="NC_010681.1"/>
</dbReference>
<dbReference type="SMR" id="B2T2A5"/>
<dbReference type="STRING" id="398527.Bphyt_1301"/>
<dbReference type="KEGG" id="bpy:Bphyt_1301"/>
<dbReference type="eggNOG" id="COG0217">
    <property type="taxonomic scope" value="Bacteria"/>
</dbReference>
<dbReference type="HOGENOM" id="CLU_062974_2_2_4"/>
<dbReference type="OrthoDB" id="9781053at2"/>
<dbReference type="Proteomes" id="UP000001739">
    <property type="component" value="Chromosome 1"/>
</dbReference>
<dbReference type="GO" id="GO:0005829">
    <property type="term" value="C:cytosol"/>
    <property type="evidence" value="ECO:0007669"/>
    <property type="project" value="TreeGrafter"/>
</dbReference>
<dbReference type="GO" id="GO:0003677">
    <property type="term" value="F:DNA binding"/>
    <property type="evidence" value="ECO:0007669"/>
    <property type="project" value="UniProtKB-UniRule"/>
</dbReference>
<dbReference type="GO" id="GO:0006355">
    <property type="term" value="P:regulation of DNA-templated transcription"/>
    <property type="evidence" value="ECO:0007669"/>
    <property type="project" value="UniProtKB-UniRule"/>
</dbReference>
<dbReference type="FunFam" id="1.10.10.200:FF:000001">
    <property type="entry name" value="Probable transcriptional regulatory protein YebC"/>
    <property type="match status" value="1"/>
</dbReference>
<dbReference type="FunFam" id="3.30.70.980:FF:000002">
    <property type="entry name" value="Probable transcriptional regulatory protein YebC"/>
    <property type="match status" value="1"/>
</dbReference>
<dbReference type="Gene3D" id="1.10.10.200">
    <property type="match status" value="1"/>
</dbReference>
<dbReference type="Gene3D" id="3.30.70.980">
    <property type="match status" value="2"/>
</dbReference>
<dbReference type="HAMAP" id="MF_00693">
    <property type="entry name" value="Transcrip_reg_TACO1"/>
    <property type="match status" value="1"/>
</dbReference>
<dbReference type="InterPro" id="IPR017856">
    <property type="entry name" value="Integrase-like_N"/>
</dbReference>
<dbReference type="InterPro" id="IPR048300">
    <property type="entry name" value="TACO1_YebC-like_2nd/3rd_dom"/>
</dbReference>
<dbReference type="InterPro" id="IPR049083">
    <property type="entry name" value="TACO1_YebC_N"/>
</dbReference>
<dbReference type="InterPro" id="IPR002876">
    <property type="entry name" value="Transcrip_reg_TACO1-like"/>
</dbReference>
<dbReference type="InterPro" id="IPR026564">
    <property type="entry name" value="Transcrip_reg_TACO1-like_dom3"/>
</dbReference>
<dbReference type="InterPro" id="IPR029072">
    <property type="entry name" value="YebC-like"/>
</dbReference>
<dbReference type="NCBIfam" id="NF001030">
    <property type="entry name" value="PRK00110.1"/>
    <property type="match status" value="1"/>
</dbReference>
<dbReference type="NCBIfam" id="NF009044">
    <property type="entry name" value="PRK12378.1"/>
    <property type="match status" value="1"/>
</dbReference>
<dbReference type="NCBIfam" id="TIGR01033">
    <property type="entry name" value="YebC/PmpR family DNA-binding transcriptional regulator"/>
    <property type="match status" value="1"/>
</dbReference>
<dbReference type="PANTHER" id="PTHR12532:SF6">
    <property type="entry name" value="TRANSCRIPTIONAL REGULATORY PROTEIN YEBC-RELATED"/>
    <property type="match status" value="1"/>
</dbReference>
<dbReference type="PANTHER" id="PTHR12532">
    <property type="entry name" value="TRANSLATIONAL ACTIVATOR OF CYTOCHROME C OXIDASE 1"/>
    <property type="match status" value="1"/>
</dbReference>
<dbReference type="Pfam" id="PF20772">
    <property type="entry name" value="TACO1_YebC_N"/>
    <property type="match status" value="1"/>
</dbReference>
<dbReference type="Pfam" id="PF01709">
    <property type="entry name" value="Transcrip_reg"/>
    <property type="match status" value="1"/>
</dbReference>
<dbReference type="SUPFAM" id="SSF75625">
    <property type="entry name" value="YebC-like"/>
    <property type="match status" value="1"/>
</dbReference>